<feature type="chain" id="PRO_1000073594" description="Proline--tRNA ligase">
    <location>
        <begin position="1"/>
        <end position="440"/>
    </location>
</feature>
<accession>A8I438</accession>
<protein>
    <recommendedName>
        <fullName evidence="1">Proline--tRNA ligase</fullName>
        <ecNumber evidence="1">6.1.1.15</ecNumber>
    </recommendedName>
    <alternativeName>
        <fullName evidence="1">Prolyl-tRNA synthetase</fullName>
        <shortName evidence="1">ProRS</shortName>
    </alternativeName>
</protein>
<proteinExistence type="inferred from homology"/>
<comment type="function">
    <text evidence="1">Catalyzes the attachment of proline to tRNA(Pro) in a two-step reaction: proline is first activated by ATP to form Pro-AMP and then transferred to the acceptor end of tRNA(Pro).</text>
</comment>
<comment type="catalytic activity">
    <reaction evidence="1">
        <text>tRNA(Pro) + L-proline + ATP = L-prolyl-tRNA(Pro) + AMP + diphosphate</text>
        <dbReference type="Rhea" id="RHEA:14305"/>
        <dbReference type="Rhea" id="RHEA-COMP:9700"/>
        <dbReference type="Rhea" id="RHEA-COMP:9702"/>
        <dbReference type="ChEBI" id="CHEBI:30616"/>
        <dbReference type="ChEBI" id="CHEBI:33019"/>
        <dbReference type="ChEBI" id="CHEBI:60039"/>
        <dbReference type="ChEBI" id="CHEBI:78442"/>
        <dbReference type="ChEBI" id="CHEBI:78532"/>
        <dbReference type="ChEBI" id="CHEBI:456215"/>
        <dbReference type="EC" id="6.1.1.15"/>
    </reaction>
</comment>
<comment type="subunit">
    <text evidence="1">Homodimer.</text>
</comment>
<comment type="subcellular location">
    <subcellularLocation>
        <location evidence="1">Cytoplasm</location>
    </subcellularLocation>
</comment>
<comment type="similarity">
    <text evidence="1">Belongs to the class-II aminoacyl-tRNA synthetase family. ProS type 2 subfamily.</text>
</comment>
<keyword id="KW-0030">Aminoacyl-tRNA synthetase</keyword>
<keyword id="KW-0067">ATP-binding</keyword>
<keyword id="KW-0963">Cytoplasm</keyword>
<keyword id="KW-0436">Ligase</keyword>
<keyword id="KW-0547">Nucleotide-binding</keyword>
<keyword id="KW-0648">Protein biosynthesis</keyword>
<keyword id="KW-1185">Reference proteome</keyword>
<gene>
    <name evidence="1" type="primary">proS</name>
    <name type="ordered locus">AZC_1686</name>
</gene>
<evidence type="ECO:0000255" key="1">
    <source>
        <dbReference type="HAMAP-Rule" id="MF_01570"/>
    </source>
</evidence>
<organism>
    <name type="scientific">Azorhizobium caulinodans (strain ATCC 43989 / DSM 5975 / JCM 20966 / LMG 6465 / NBRC 14845 / NCIMB 13405 / ORS 571)</name>
    <dbReference type="NCBI Taxonomy" id="438753"/>
    <lineage>
        <taxon>Bacteria</taxon>
        <taxon>Pseudomonadati</taxon>
        <taxon>Pseudomonadota</taxon>
        <taxon>Alphaproteobacteria</taxon>
        <taxon>Hyphomicrobiales</taxon>
        <taxon>Xanthobacteraceae</taxon>
        <taxon>Azorhizobium</taxon>
    </lineage>
</organism>
<name>SYP_AZOC5</name>
<reference key="1">
    <citation type="submission" date="2007-04" db="EMBL/GenBank/DDBJ databases">
        <title>Complete genome sequence of the nitrogen-fixing bacterium Azorhizobium caulinodans ORS571.</title>
        <authorList>
            <person name="Lee K.B."/>
            <person name="Backer P.D."/>
            <person name="Aono T."/>
            <person name="Liu C.T."/>
            <person name="Suzuki S."/>
            <person name="Suzuki T."/>
            <person name="Kaneko T."/>
            <person name="Yamada M."/>
            <person name="Tabata S."/>
            <person name="Kupfer D.M."/>
            <person name="Najar F.Z."/>
            <person name="Wiley G.B."/>
            <person name="Roe B."/>
            <person name="Binnewies T."/>
            <person name="Ussery D."/>
            <person name="Vereecke D."/>
            <person name="Gevers D."/>
            <person name="Holsters M."/>
            <person name="Oyaizu H."/>
        </authorList>
    </citation>
    <scope>NUCLEOTIDE SEQUENCE [LARGE SCALE GENOMIC DNA]</scope>
    <source>
        <strain>ATCC 43989 / DSM 5975 / JCM 20966 / LMG 6465 / NBRC 14845 / NCIMB 13405 / ORS 571</strain>
    </source>
</reference>
<dbReference type="EC" id="6.1.1.15" evidence="1"/>
<dbReference type="EMBL" id="AP009384">
    <property type="protein sequence ID" value="BAF87684.1"/>
    <property type="molecule type" value="Genomic_DNA"/>
</dbReference>
<dbReference type="RefSeq" id="WP_012170214.1">
    <property type="nucleotide sequence ID" value="NC_009937.1"/>
</dbReference>
<dbReference type="SMR" id="A8I438"/>
<dbReference type="STRING" id="438753.AZC_1686"/>
<dbReference type="KEGG" id="azc:AZC_1686"/>
<dbReference type="eggNOG" id="COG0442">
    <property type="taxonomic scope" value="Bacteria"/>
</dbReference>
<dbReference type="HOGENOM" id="CLU_016739_4_2_5"/>
<dbReference type="Proteomes" id="UP000000270">
    <property type="component" value="Chromosome"/>
</dbReference>
<dbReference type="GO" id="GO:0005829">
    <property type="term" value="C:cytosol"/>
    <property type="evidence" value="ECO:0007669"/>
    <property type="project" value="TreeGrafter"/>
</dbReference>
<dbReference type="GO" id="GO:0005524">
    <property type="term" value="F:ATP binding"/>
    <property type="evidence" value="ECO:0007669"/>
    <property type="project" value="UniProtKB-UniRule"/>
</dbReference>
<dbReference type="GO" id="GO:0004827">
    <property type="term" value="F:proline-tRNA ligase activity"/>
    <property type="evidence" value="ECO:0007669"/>
    <property type="project" value="UniProtKB-UniRule"/>
</dbReference>
<dbReference type="GO" id="GO:0006433">
    <property type="term" value="P:prolyl-tRNA aminoacylation"/>
    <property type="evidence" value="ECO:0007669"/>
    <property type="project" value="UniProtKB-UniRule"/>
</dbReference>
<dbReference type="CDD" id="cd00861">
    <property type="entry name" value="ProRS_anticodon_short"/>
    <property type="match status" value="1"/>
</dbReference>
<dbReference type="CDD" id="cd00779">
    <property type="entry name" value="ProRS_core_prok"/>
    <property type="match status" value="1"/>
</dbReference>
<dbReference type="FunFam" id="3.30.930.10:FF:000042">
    <property type="entry name" value="probable proline--tRNA ligase, mitochondrial"/>
    <property type="match status" value="1"/>
</dbReference>
<dbReference type="FunFam" id="3.40.50.800:FF:000032">
    <property type="entry name" value="Proline--tRNA ligase"/>
    <property type="match status" value="1"/>
</dbReference>
<dbReference type="Gene3D" id="3.40.50.800">
    <property type="entry name" value="Anticodon-binding domain"/>
    <property type="match status" value="1"/>
</dbReference>
<dbReference type="Gene3D" id="3.30.930.10">
    <property type="entry name" value="Bira Bifunctional Protein, Domain 2"/>
    <property type="match status" value="1"/>
</dbReference>
<dbReference type="HAMAP" id="MF_01570">
    <property type="entry name" value="Pro_tRNA_synth_type2"/>
    <property type="match status" value="1"/>
</dbReference>
<dbReference type="InterPro" id="IPR002314">
    <property type="entry name" value="aa-tRNA-synt_IIb"/>
</dbReference>
<dbReference type="InterPro" id="IPR006195">
    <property type="entry name" value="aa-tRNA-synth_II"/>
</dbReference>
<dbReference type="InterPro" id="IPR045864">
    <property type="entry name" value="aa-tRNA-synth_II/BPL/LPL"/>
</dbReference>
<dbReference type="InterPro" id="IPR004154">
    <property type="entry name" value="Anticodon-bd"/>
</dbReference>
<dbReference type="InterPro" id="IPR036621">
    <property type="entry name" value="Anticodon-bd_dom_sf"/>
</dbReference>
<dbReference type="InterPro" id="IPR002316">
    <property type="entry name" value="Pro-tRNA-ligase_IIa"/>
</dbReference>
<dbReference type="InterPro" id="IPR004500">
    <property type="entry name" value="Pro-tRNA-synth_IIa_bac-type"/>
</dbReference>
<dbReference type="InterPro" id="IPR050062">
    <property type="entry name" value="Pro-tRNA_synthetase"/>
</dbReference>
<dbReference type="InterPro" id="IPR023716">
    <property type="entry name" value="Prolyl-tRNA_ligase_IIa_type2"/>
</dbReference>
<dbReference type="InterPro" id="IPR044140">
    <property type="entry name" value="ProRS_anticodon_short"/>
</dbReference>
<dbReference type="InterPro" id="IPR033730">
    <property type="entry name" value="ProRS_core_prok"/>
</dbReference>
<dbReference type="NCBIfam" id="NF008979">
    <property type="entry name" value="PRK12325.1"/>
    <property type="match status" value="1"/>
</dbReference>
<dbReference type="NCBIfam" id="TIGR00409">
    <property type="entry name" value="proS_fam_II"/>
    <property type="match status" value="1"/>
</dbReference>
<dbReference type="PANTHER" id="PTHR42753">
    <property type="entry name" value="MITOCHONDRIAL RIBOSOME PROTEIN L39/PROLYL-TRNA LIGASE FAMILY MEMBER"/>
    <property type="match status" value="1"/>
</dbReference>
<dbReference type="PANTHER" id="PTHR42753:SF2">
    <property type="entry name" value="PROLINE--TRNA LIGASE"/>
    <property type="match status" value="1"/>
</dbReference>
<dbReference type="Pfam" id="PF03129">
    <property type="entry name" value="HGTP_anticodon"/>
    <property type="match status" value="1"/>
</dbReference>
<dbReference type="Pfam" id="PF00587">
    <property type="entry name" value="tRNA-synt_2b"/>
    <property type="match status" value="1"/>
</dbReference>
<dbReference type="PRINTS" id="PR01046">
    <property type="entry name" value="TRNASYNTHPRO"/>
</dbReference>
<dbReference type="SUPFAM" id="SSF52954">
    <property type="entry name" value="Class II aaRS ABD-related"/>
    <property type="match status" value="1"/>
</dbReference>
<dbReference type="SUPFAM" id="SSF55681">
    <property type="entry name" value="Class II aaRS and biotin synthetases"/>
    <property type="match status" value="1"/>
</dbReference>
<dbReference type="PROSITE" id="PS50862">
    <property type="entry name" value="AA_TRNA_LIGASE_II"/>
    <property type="match status" value="1"/>
</dbReference>
<sequence>MRLSRYFLPILREVPKEADIVSHRLMLRAGMIRQESAGIYAWLPLGLRVLNKICNIIREEQNRTGAVELLMPTIQSADLWRESGRYDDYGKEMLRIKDRHERDMLFGPTNEEMITEIVRGSIKSYKSLPLNLYHIQWKFRDEVRPRFGVYRSREFLMKDAYSFDLDAEGAKHSYNKMFVAYLRTFARMGLKAIPMVADTGPIGGNLSHEFIILASTGESEVFCHGDYLEMAPPPADVNFDDAAAIQQVVNDWTTLYAATEEKHDAATFAAIPAERQMAARGIEVGHIFYFGTKYSAPFNAKVLGPDGAEHLIHMGSYGIGPSRLVAAMIEASHDDAGIIWPDAVAPFQVGILNLKVGDSAVDAACADLYAKLTAAGVDVLYDDTDERAGSKFATADLIGLPWQILVGPKSLADGKVELKRRVDGSRELVTPAEAFERLKG</sequence>